<sequence length="326" mass="37851">MSHQLTFADSEFSSKRRQTRKEIFLSRMEQILPWQNMVEVIEPFYPKAGNGRRPYPLETMLRIHCMQHWYNLSDGAMEDALYEIASMRLFARLSLDSALPDRTTIMNFRHLLEQHQLARQLFKTINRWLAEAGVMMTQGTLVDATIIEAPSSTKNKEQQRDPEMHQTKKGNQWHFGMKAHIGVDAKSGLTHSLVTTAANEHDLNQLGNLLHGEEQFVSADAGYQGAPQREELAEVDVDWLIAERPGKVRTLKQHPRKNKTAINIEYMKASIRARVEHPFRIIKRQFGFVKARYKGLLKNDNQLAMLFTLANLFRADQMIRQWERSH</sequence>
<evidence type="ECO:0000305" key="1"/>
<accession>P0CE65</accession>
<accession>O07987</accession>
<accession>O07988</accession>
<accession>P03837</accession>
<accession>P76355</accession>
<accession>Q2MBK1</accession>
<accession>Q2MBM8</accession>
<comment type="function">
    <text>Involved in the transposition of the insertion sequence IS5.</text>
</comment>
<comment type="similarity">
    <text evidence="1">Belongs to the transposase 11 family.</text>
</comment>
<comment type="caution">
    <text evidence="1">There is no equivalent of this gene in strain K12 / MG1655.</text>
</comment>
<dbReference type="EMBL" id="AP009048">
    <property type="protein sequence ID" value="BAE78086.1"/>
    <property type="molecule type" value="Genomic_DNA"/>
</dbReference>
<dbReference type="RefSeq" id="WP_000019403.1">
    <property type="nucleotide sequence ID" value="NZ_SSZK01000120.1"/>
</dbReference>
<dbReference type="KEGG" id="ecj:JW5951"/>
<dbReference type="KEGG" id="ecoc:C3026_01250"/>
<dbReference type="KEGG" id="ecoc:C3026_02730"/>
<dbReference type="KEGG" id="ecoc:C3026_03280"/>
<dbReference type="KEGG" id="ecoc:C3026_07795"/>
<dbReference type="KEGG" id="ecoc:C3026_10760"/>
<dbReference type="KEGG" id="ecoc:C3026_11440"/>
<dbReference type="KEGG" id="ecoc:C3026_12250"/>
<dbReference type="KEGG" id="ecoc:C3026_16315"/>
<dbReference type="KEGG" id="ecoc:C3026_17505"/>
<dbReference type="KEGG" id="ecoc:C3026_18985"/>
<dbReference type="KEGG" id="ecoc:C3026_23975"/>
<dbReference type="PATRIC" id="fig|83333.103.peg.1012"/>
<dbReference type="HOGENOM" id="CLU_049873_1_2_6"/>
<dbReference type="PhylomeDB" id="P0CE65"/>
<dbReference type="PRO" id="PR:P0CE65"/>
<dbReference type="GO" id="GO:0003677">
    <property type="term" value="F:DNA binding"/>
    <property type="evidence" value="ECO:0007669"/>
    <property type="project" value="UniProtKB-KW"/>
</dbReference>
<dbReference type="GO" id="GO:0004803">
    <property type="term" value="F:transposase activity"/>
    <property type="evidence" value="ECO:0007669"/>
    <property type="project" value="InterPro"/>
</dbReference>
<dbReference type="GO" id="GO:0006313">
    <property type="term" value="P:DNA transposition"/>
    <property type="evidence" value="ECO:0007669"/>
    <property type="project" value="InterPro"/>
</dbReference>
<dbReference type="InterPro" id="IPR047959">
    <property type="entry name" value="Transpos_IS5"/>
</dbReference>
<dbReference type="InterPro" id="IPR002559">
    <property type="entry name" value="Transposase_11"/>
</dbReference>
<dbReference type="InterPro" id="IPR008490">
    <property type="entry name" value="Transposase_InsH_N"/>
</dbReference>
<dbReference type="NCBIfam" id="NF033581">
    <property type="entry name" value="transpos_IS5_4"/>
    <property type="match status" value="1"/>
</dbReference>
<dbReference type="PANTHER" id="PTHR35604">
    <property type="entry name" value="TRANSPOSASE INSH FOR INSERTION SEQUENCE ELEMENT IS5A-RELATED"/>
    <property type="match status" value="1"/>
</dbReference>
<dbReference type="PANTHER" id="PTHR35604:SF2">
    <property type="entry name" value="TRANSPOSASE INSH FOR INSERTION SEQUENCE ELEMENT IS5A-RELATED"/>
    <property type="match status" value="1"/>
</dbReference>
<dbReference type="Pfam" id="PF01609">
    <property type="entry name" value="DDE_Tnp_1"/>
    <property type="match status" value="1"/>
</dbReference>
<dbReference type="Pfam" id="PF05598">
    <property type="entry name" value="DUF772"/>
    <property type="match status" value="1"/>
</dbReference>
<keyword id="KW-0233">DNA recombination</keyword>
<keyword id="KW-0238">DNA-binding</keyword>
<keyword id="KW-0814">Transposable element</keyword>
<keyword id="KW-0815">Transposition</keyword>
<name>INH18_ECOLI</name>
<organism>
    <name type="scientific">Escherichia coli (strain K12)</name>
    <dbReference type="NCBI Taxonomy" id="83333"/>
    <lineage>
        <taxon>Bacteria</taxon>
        <taxon>Pseudomonadati</taxon>
        <taxon>Pseudomonadota</taxon>
        <taxon>Gammaproteobacteria</taxon>
        <taxon>Enterobacterales</taxon>
        <taxon>Enterobacteriaceae</taxon>
        <taxon>Escherichia</taxon>
    </lineage>
</organism>
<reference key="1">
    <citation type="journal article" date="1996" name="DNA Res.">
        <title>A 570-kb DNA sequence of the Escherichia coli K-12 genome corresponding to the 28.0-40.1 min region on the linkage map.</title>
        <authorList>
            <person name="Aiba H."/>
            <person name="Baba T."/>
            <person name="Fujita K."/>
            <person name="Hayashi K."/>
            <person name="Inada T."/>
            <person name="Isono K."/>
            <person name="Itoh T."/>
            <person name="Kasai H."/>
            <person name="Kashimoto K."/>
            <person name="Kimura S."/>
            <person name="Kitakawa M."/>
            <person name="Kitagawa M."/>
            <person name="Makino K."/>
            <person name="Miki T."/>
            <person name="Mizobuchi K."/>
            <person name="Mori H."/>
            <person name="Mori T."/>
            <person name="Motomura K."/>
            <person name="Nakade S."/>
            <person name="Nakamura Y."/>
            <person name="Nashimoto H."/>
            <person name="Nishio Y."/>
            <person name="Oshima T."/>
            <person name="Saito N."/>
            <person name="Sampei G."/>
            <person name="Seki Y."/>
            <person name="Sivasundaram S."/>
            <person name="Tagami H."/>
            <person name="Takeda J."/>
            <person name="Takemoto K."/>
            <person name="Takeuchi Y."/>
            <person name="Wada C."/>
            <person name="Yamamoto Y."/>
            <person name="Horiuchi T."/>
        </authorList>
    </citation>
    <scope>NUCLEOTIDE SEQUENCE [LARGE SCALE GENOMIC DNA]</scope>
    <source>
        <strain>K12 / W3110 / ATCC 27325 / DSM 5911</strain>
    </source>
</reference>
<reference key="2">
    <citation type="journal article" date="1996" name="DNA Res.">
        <title>A 460-kb DNA sequence of the Escherichia coli K-12 genome corresponding to the 40.1-50.0 min region on the linkage map.</title>
        <authorList>
            <person name="Itoh T."/>
            <person name="Aiba H."/>
            <person name="Baba T."/>
            <person name="Fujita K."/>
            <person name="Hayashi K."/>
            <person name="Inada T."/>
            <person name="Isono K."/>
            <person name="Kasai H."/>
            <person name="Kimura S."/>
            <person name="Kitakawa M."/>
            <person name="Kitagawa M."/>
            <person name="Makino K."/>
            <person name="Miki T."/>
            <person name="Mizobuchi K."/>
            <person name="Mori H."/>
            <person name="Mori T."/>
            <person name="Motomura K."/>
            <person name="Nakade S."/>
            <person name="Nakamura Y."/>
            <person name="Nashimoto H."/>
            <person name="Nishio Y."/>
            <person name="Oshima T."/>
            <person name="Saito N."/>
            <person name="Sampei G."/>
            <person name="Seki Y."/>
            <person name="Sivasundaram S."/>
            <person name="Tagami H."/>
            <person name="Takeda J."/>
            <person name="Takemoto K."/>
            <person name="Wada C."/>
            <person name="Yamamoto Y."/>
            <person name="Horiuchi T."/>
        </authorList>
    </citation>
    <scope>NUCLEOTIDE SEQUENCE [LARGE SCALE GENOMIC DNA]</scope>
    <source>
        <strain>K12 / W3110 / ATCC 27325 / DSM 5911</strain>
    </source>
</reference>
<reference key="3">
    <citation type="journal article" date="2006" name="Mol. Syst. Biol.">
        <title>Highly accurate genome sequences of Escherichia coli K-12 strains MG1655 and W3110.</title>
        <authorList>
            <person name="Hayashi K."/>
            <person name="Morooka N."/>
            <person name="Yamamoto Y."/>
            <person name="Fujita K."/>
            <person name="Isono K."/>
            <person name="Choi S."/>
            <person name="Ohtsubo E."/>
            <person name="Baba T."/>
            <person name="Wanner B.L."/>
            <person name="Mori H."/>
            <person name="Horiuchi T."/>
        </authorList>
    </citation>
    <scope>NUCLEOTIDE SEQUENCE [LARGE SCALE GENOMIC DNA]</scope>
    <source>
        <strain>K12 / W3110 / ATCC 27325 / DSM 5911</strain>
    </source>
</reference>
<proteinExistence type="inferred from homology"/>
<gene>
    <name type="ordered locus">JW5951</name>
</gene>
<protein>
    <recommendedName>
        <fullName>Transposase InsH for insertion sequence element IS5-18</fullName>
    </recommendedName>
</protein>
<feature type="chain" id="PRO_0000392496" description="Transposase InsH for insertion sequence element IS5-18">
    <location>
        <begin position="1"/>
        <end position="326"/>
    </location>
</feature>